<feature type="chain" id="PRO_1000124080" description="4-hydroxy-tetrahydrodipicolinate synthase">
    <location>
        <begin position="1"/>
        <end position="293"/>
    </location>
</feature>
<feature type="active site" description="Proton donor/acceptor" evidence="1">
    <location>
        <position position="133"/>
    </location>
</feature>
<feature type="active site" description="Schiff-base intermediate with substrate" evidence="1">
    <location>
        <position position="161"/>
    </location>
</feature>
<feature type="binding site" evidence="1">
    <location>
        <position position="46"/>
    </location>
    <ligand>
        <name>pyruvate</name>
        <dbReference type="ChEBI" id="CHEBI:15361"/>
    </ligand>
</feature>
<feature type="binding site" evidence="1">
    <location>
        <position position="202"/>
    </location>
    <ligand>
        <name>pyruvate</name>
        <dbReference type="ChEBI" id="CHEBI:15361"/>
    </ligand>
</feature>
<feature type="site" description="Part of a proton relay during catalysis" evidence="1">
    <location>
        <position position="45"/>
    </location>
</feature>
<feature type="site" description="Part of a proton relay during catalysis" evidence="1">
    <location>
        <position position="107"/>
    </location>
</feature>
<dbReference type="EC" id="4.3.3.7" evidence="1"/>
<dbReference type="EMBL" id="AM999887">
    <property type="protein sequence ID" value="CAQ54924.1"/>
    <property type="molecule type" value="Genomic_DNA"/>
</dbReference>
<dbReference type="RefSeq" id="WP_012481921.1">
    <property type="nucleotide sequence ID" value="NC_010981.1"/>
</dbReference>
<dbReference type="SMR" id="B3CM06"/>
<dbReference type="KEGG" id="wpi:WP0816"/>
<dbReference type="eggNOG" id="COG0329">
    <property type="taxonomic scope" value="Bacteria"/>
</dbReference>
<dbReference type="HOGENOM" id="CLU_049343_7_0_5"/>
<dbReference type="UniPathway" id="UPA00034">
    <property type="reaction ID" value="UER00017"/>
</dbReference>
<dbReference type="Proteomes" id="UP000008814">
    <property type="component" value="Chromosome"/>
</dbReference>
<dbReference type="GO" id="GO:0005829">
    <property type="term" value="C:cytosol"/>
    <property type="evidence" value="ECO:0007669"/>
    <property type="project" value="TreeGrafter"/>
</dbReference>
<dbReference type="GO" id="GO:0008840">
    <property type="term" value="F:4-hydroxy-tetrahydrodipicolinate synthase activity"/>
    <property type="evidence" value="ECO:0007669"/>
    <property type="project" value="UniProtKB-UniRule"/>
</dbReference>
<dbReference type="GO" id="GO:0019877">
    <property type="term" value="P:diaminopimelate biosynthetic process"/>
    <property type="evidence" value="ECO:0007669"/>
    <property type="project" value="UniProtKB-UniRule"/>
</dbReference>
<dbReference type="GO" id="GO:0009089">
    <property type="term" value="P:lysine biosynthetic process via diaminopimelate"/>
    <property type="evidence" value="ECO:0007669"/>
    <property type="project" value="UniProtKB-UniRule"/>
</dbReference>
<dbReference type="CDD" id="cd00950">
    <property type="entry name" value="DHDPS"/>
    <property type="match status" value="1"/>
</dbReference>
<dbReference type="Gene3D" id="3.20.20.70">
    <property type="entry name" value="Aldolase class I"/>
    <property type="match status" value="1"/>
</dbReference>
<dbReference type="HAMAP" id="MF_00418">
    <property type="entry name" value="DapA"/>
    <property type="match status" value="1"/>
</dbReference>
<dbReference type="InterPro" id="IPR013785">
    <property type="entry name" value="Aldolase_TIM"/>
</dbReference>
<dbReference type="InterPro" id="IPR005263">
    <property type="entry name" value="DapA"/>
</dbReference>
<dbReference type="InterPro" id="IPR002220">
    <property type="entry name" value="DapA-like"/>
</dbReference>
<dbReference type="InterPro" id="IPR020625">
    <property type="entry name" value="Schiff_base-form_aldolases_AS"/>
</dbReference>
<dbReference type="InterPro" id="IPR020624">
    <property type="entry name" value="Schiff_base-form_aldolases_CS"/>
</dbReference>
<dbReference type="NCBIfam" id="TIGR00674">
    <property type="entry name" value="dapA"/>
    <property type="match status" value="1"/>
</dbReference>
<dbReference type="PANTHER" id="PTHR12128:SF66">
    <property type="entry name" value="4-HYDROXY-2-OXOGLUTARATE ALDOLASE, MITOCHONDRIAL"/>
    <property type="match status" value="1"/>
</dbReference>
<dbReference type="PANTHER" id="PTHR12128">
    <property type="entry name" value="DIHYDRODIPICOLINATE SYNTHASE"/>
    <property type="match status" value="1"/>
</dbReference>
<dbReference type="Pfam" id="PF00701">
    <property type="entry name" value="DHDPS"/>
    <property type="match status" value="1"/>
</dbReference>
<dbReference type="PIRSF" id="PIRSF001365">
    <property type="entry name" value="DHDPS"/>
    <property type="match status" value="1"/>
</dbReference>
<dbReference type="PRINTS" id="PR00146">
    <property type="entry name" value="DHPICSNTHASE"/>
</dbReference>
<dbReference type="SMART" id="SM01130">
    <property type="entry name" value="DHDPS"/>
    <property type="match status" value="1"/>
</dbReference>
<dbReference type="SUPFAM" id="SSF51569">
    <property type="entry name" value="Aldolase"/>
    <property type="match status" value="1"/>
</dbReference>
<dbReference type="PROSITE" id="PS00665">
    <property type="entry name" value="DHDPS_1"/>
    <property type="match status" value="1"/>
</dbReference>
<dbReference type="PROSITE" id="PS00666">
    <property type="entry name" value="DHDPS_2"/>
    <property type="match status" value="1"/>
</dbReference>
<proteinExistence type="inferred from homology"/>
<protein>
    <recommendedName>
        <fullName evidence="1">4-hydroxy-tetrahydrodipicolinate synthase</fullName>
        <shortName evidence="1">HTPA synthase</shortName>
        <ecNumber evidence="1">4.3.3.7</ecNumber>
    </recommendedName>
</protein>
<sequence length="293" mass="32380">MKSTFLWTACVTPFNCSGDSIDYQSLQRLLTMQAETENGVVLLGSTGESLSLTDSEKRTLVEFVCELKLNTKIIIGVPGVNLYQTLEWLDFCKGMPIHGYLMTTPIYAKPGIMGQTLWFEKLLEKAHVPAMLYNIPSRAGVSLHAETVRNLSSHEKFWAIKDSSGTVDTLTQYKKVAPNIEVFCGDDNMIPDMAAKGAAGLVSVAANVWPSVVHEYVKQCMSGENPQADSWQQACKTLFTASNPIPTKALLHDIGLIEHKTVRLPLSTEDLPSIETLRQANKMILGWKELTNS</sequence>
<accession>B3CM06</accession>
<organism>
    <name type="scientific">Wolbachia pipientis subsp. Culex pipiens (strain wPip)</name>
    <dbReference type="NCBI Taxonomy" id="570417"/>
    <lineage>
        <taxon>Bacteria</taxon>
        <taxon>Pseudomonadati</taxon>
        <taxon>Pseudomonadota</taxon>
        <taxon>Alphaproteobacteria</taxon>
        <taxon>Rickettsiales</taxon>
        <taxon>Anaplasmataceae</taxon>
        <taxon>Wolbachieae</taxon>
        <taxon>Wolbachia</taxon>
    </lineage>
</organism>
<name>DAPA_WOLPP</name>
<keyword id="KW-0028">Amino-acid biosynthesis</keyword>
<keyword id="KW-0963">Cytoplasm</keyword>
<keyword id="KW-0220">Diaminopimelate biosynthesis</keyword>
<keyword id="KW-0456">Lyase</keyword>
<keyword id="KW-0457">Lysine biosynthesis</keyword>
<keyword id="KW-0704">Schiff base</keyword>
<comment type="function">
    <text evidence="1">Catalyzes the condensation of (S)-aspartate-beta-semialdehyde [(S)-ASA] and pyruvate to 4-hydroxy-tetrahydrodipicolinate (HTPA).</text>
</comment>
<comment type="catalytic activity">
    <reaction evidence="1">
        <text>L-aspartate 4-semialdehyde + pyruvate = (2S,4S)-4-hydroxy-2,3,4,5-tetrahydrodipicolinate + H2O + H(+)</text>
        <dbReference type="Rhea" id="RHEA:34171"/>
        <dbReference type="ChEBI" id="CHEBI:15361"/>
        <dbReference type="ChEBI" id="CHEBI:15377"/>
        <dbReference type="ChEBI" id="CHEBI:15378"/>
        <dbReference type="ChEBI" id="CHEBI:67139"/>
        <dbReference type="ChEBI" id="CHEBI:537519"/>
        <dbReference type="EC" id="4.3.3.7"/>
    </reaction>
</comment>
<comment type="pathway">
    <text evidence="1">Amino-acid biosynthesis; L-lysine biosynthesis via DAP pathway; (S)-tetrahydrodipicolinate from L-aspartate: step 3/4.</text>
</comment>
<comment type="subunit">
    <text evidence="1">Homotetramer; dimer of dimers.</text>
</comment>
<comment type="subcellular location">
    <subcellularLocation>
        <location evidence="1">Cytoplasm</location>
    </subcellularLocation>
</comment>
<comment type="similarity">
    <text evidence="1">Belongs to the DapA family.</text>
</comment>
<comment type="caution">
    <text evidence="2">Was originally thought to be a dihydrodipicolinate synthase (DHDPS), catalyzing the condensation of (S)-aspartate-beta-semialdehyde [(S)-ASA] and pyruvate to dihydrodipicolinate (DHDP). However, it was shown in E.coli that the product of the enzymatic reaction is not dihydrodipicolinate but in fact (4S)-4-hydroxy-2,3,4,5-tetrahydro-(2S)-dipicolinic acid (HTPA), and that the consecutive dehydration reaction leading to DHDP is not spontaneous but catalyzed by DapB.</text>
</comment>
<gene>
    <name evidence="1" type="primary">dapA</name>
    <name type="ordered locus">WP0816</name>
</gene>
<reference key="1">
    <citation type="journal article" date="2008" name="Mol. Biol. Evol.">
        <title>Genome evolution of Wolbachia strain wPip from the Culex pipiens group.</title>
        <authorList>
            <person name="Klasson L."/>
            <person name="Walker T."/>
            <person name="Sebaihia M."/>
            <person name="Sanders M.J."/>
            <person name="Quail M.A."/>
            <person name="Lord A."/>
            <person name="Sanders S."/>
            <person name="Earl J."/>
            <person name="O'Neill S.L."/>
            <person name="Thomson N."/>
            <person name="Sinkins S.P."/>
            <person name="Parkhill J."/>
        </authorList>
    </citation>
    <scope>NUCLEOTIDE SEQUENCE [LARGE SCALE GENOMIC DNA]</scope>
    <source>
        <strain>wPip</strain>
    </source>
</reference>
<evidence type="ECO:0000255" key="1">
    <source>
        <dbReference type="HAMAP-Rule" id="MF_00418"/>
    </source>
</evidence>
<evidence type="ECO:0000305" key="2"/>